<accession>Q96PK6</accession>
<accession>B0LM41</accession>
<accession>B3KMN4</accession>
<accession>D6RGD8</accession>
<accession>O75932</accession>
<accession>Q2PYN1</accession>
<accession>Q53GV1</accession>
<accession>Q68DQ9</accession>
<accession>Q96PK5</accession>
<feature type="chain" id="PRO_0000081774" description="RNA-binding protein 14">
    <location>
        <begin position="1"/>
        <end position="669"/>
    </location>
</feature>
<feature type="domain" description="RRM 1" evidence="2">
    <location>
        <begin position="1"/>
        <end position="73"/>
    </location>
</feature>
<feature type="domain" description="RRM 2" evidence="2">
    <location>
        <begin position="79"/>
        <end position="149"/>
    </location>
</feature>
<feature type="region of interest" description="Disordered" evidence="3">
    <location>
        <begin position="147"/>
        <end position="175"/>
    </location>
</feature>
<feature type="region of interest" description="Disordered" evidence="3">
    <location>
        <begin position="193"/>
        <end position="232"/>
    </location>
</feature>
<feature type="region of interest" description="Disordered" evidence="3">
    <location>
        <begin position="284"/>
        <end position="303"/>
    </location>
</feature>
<feature type="region of interest" description="TRBP-interacting domain; interaction with STIL" evidence="7">
    <location>
        <begin position="307"/>
        <end position="354"/>
    </location>
</feature>
<feature type="region of interest" description="Disordered" evidence="3">
    <location>
        <begin position="566"/>
        <end position="590"/>
    </location>
</feature>
<feature type="compositionally biased region" description="Low complexity" evidence="3">
    <location>
        <begin position="287"/>
        <end position="303"/>
    </location>
</feature>
<feature type="modified residue" description="Phosphoserine" evidence="21 23">
    <location>
        <position position="161"/>
    </location>
</feature>
<feature type="modified residue" description="N6-acetyllysine; alternate" evidence="1">
    <location>
        <position position="164"/>
    </location>
</feature>
<feature type="modified residue" description="Phosphothreonine" evidence="15 16 19 21 23 24">
    <location>
        <position position="206"/>
    </location>
</feature>
<feature type="modified residue" description="Phosphoserine" evidence="22 23">
    <location>
        <position position="220"/>
    </location>
</feature>
<feature type="modified residue" description="Phosphoserine" evidence="23">
    <location>
        <position position="242"/>
    </location>
</feature>
<feature type="modified residue" description="Phosphoserine" evidence="23">
    <location>
        <position position="244"/>
    </location>
</feature>
<feature type="modified residue" description="Phosphoserine" evidence="18 23">
    <location>
        <position position="256"/>
    </location>
</feature>
<feature type="modified residue" description="Phosphoserine" evidence="23">
    <location>
        <position position="272"/>
    </location>
</feature>
<feature type="modified residue" description="Phosphoserine" evidence="23">
    <location>
        <position position="280"/>
    </location>
</feature>
<feature type="modified residue" description="Phosphoserine" evidence="23">
    <location>
        <position position="520"/>
    </location>
</feature>
<feature type="modified residue" description="Phosphoserine" evidence="23">
    <location>
        <position position="523"/>
    </location>
</feature>
<feature type="modified residue" description="Phosphoserine" evidence="23">
    <location>
        <position position="527"/>
    </location>
</feature>
<feature type="modified residue" description="Phosphoserine" evidence="17">
    <location>
        <position position="562"/>
    </location>
</feature>
<feature type="modified residue" description="Phosphothreonine" evidence="20">
    <location>
        <position position="572"/>
    </location>
</feature>
<feature type="modified residue" description="Phosphoserine" evidence="23">
    <location>
        <position position="582"/>
    </location>
</feature>
<feature type="modified residue" description="Phosphoserine" evidence="18 21 23">
    <location>
        <position position="618"/>
    </location>
</feature>
<feature type="modified residue" description="Phosphoserine" evidence="23">
    <location>
        <position position="620"/>
    </location>
</feature>
<feature type="modified residue" description="Phosphoserine" evidence="23">
    <location>
        <position position="623"/>
    </location>
</feature>
<feature type="modified residue" description="Phosphoserine" evidence="23">
    <location>
        <position position="627"/>
    </location>
</feature>
<feature type="modified residue" description="Phosphoserine" evidence="23">
    <location>
        <position position="643"/>
    </location>
</feature>
<feature type="modified residue" description="Phosphoserine" evidence="23">
    <location>
        <position position="649"/>
    </location>
</feature>
<feature type="cross-link" description="Glycyl lysine isopeptide (Lys-Gly) (interchain with G-Cter in SUMO2)" evidence="25 26">
    <location>
        <position position="126"/>
    </location>
</feature>
<feature type="cross-link" description="Glycyl lysine isopeptide (Lys-Gly) (interchain with G-Cter in SUMO2)" evidence="26">
    <location>
        <position position="135"/>
    </location>
</feature>
<feature type="cross-link" description="Glycyl lysine isopeptide (Lys-Gly) (interchain with G-Cter in SUMO2)" evidence="26">
    <location>
        <position position="138"/>
    </location>
</feature>
<feature type="cross-link" description="Glycyl lysine isopeptide (Lys-Gly) (interchain with G-Cter in SUMO2)" evidence="26">
    <location>
        <position position="149"/>
    </location>
</feature>
<feature type="cross-link" description="Glycyl lysine isopeptide (Lys-Gly) (interchain with G-Cter in SUMO2)" evidence="26">
    <location>
        <position position="153"/>
    </location>
</feature>
<feature type="cross-link" description="Glycyl lysine isopeptide (Lys-Gly) (interchain with G-Cter in SUMO2); alternate" evidence="26">
    <location>
        <position position="164"/>
    </location>
</feature>
<feature type="cross-link" description="Glycyl lysine isopeptide (Lys-Gly) (interchain with G-Cter in SUMO2)" evidence="26">
    <location>
        <position position="600"/>
    </location>
</feature>
<feature type="splice variant" id="VSP_047494" description="In isoform 5." evidence="13">
    <original>KDYAFVHMEKEADAKAAIAQLNGKEVKGKRINVELSTKGQKKGPGLAVQSGDKTKKPGAGDTAFPGTGGFSATFDYQQAFGNSTGGFDGQARQPTPPFFGRDRSPLRRSPPRASYVAPLTAQPATYRAQPSVSLGAAYRAQPSASLGVGYRTQPMTAQAASYRAQPSVSLGAPYRGQLASPSSQSAAASSLGPYGGAQPSASALSSYGGQAAAASSLNSYGAQGSSLA</original>
    <variation>KGKRMHVQLSTSRLRTAPGMGDQSGCYRCGKEGHWSKECPIDRSGRVADLTEQYNEQYGAVRTPYTMSYGDSLYYNNAYGALDAYYKRCRAARSYEAVAAAAASVYNYAEQTLSQLPQVQNTAMASHLTSTSLDPYDRHLLPTSGAAATAAAAAAAAAAVTAASTSYYGRDRSPLRRATAPVPTVGEGYGYGHESELSQASAAARNSLYDMARYEREQYADRARYSAF</variation>
    <location>
        <begin position="112"/>
        <end position="339"/>
    </location>
</feature>
<feature type="splice variant" id="VSP_047109" description="In isoform 4." evidence="14">
    <original>DYAFVHM</original>
    <variation>GMVPTGV</variation>
    <location>
        <begin position="113"/>
        <end position="119"/>
    </location>
</feature>
<feature type="splice variant" id="VSP_044641" description="In isoform 3." evidence="11 12">
    <original>DYAFVH</original>
    <variation>GGMCVG</variation>
    <location>
        <begin position="113"/>
        <end position="118"/>
    </location>
</feature>
<feature type="splice variant" id="VSP_044642" description="In isoform 3." evidence="11 12">
    <location>
        <begin position="119"/>
        <end position="669"/>
    </location>
</feature>
<feature type="splice variant" id="VSP_047110" description="In isoform 4." evidence="14">
    <location>
        <begin position="120"/>
        <end position="669"/>
    </location>
</feature>
<feature type="splice variant" id="VSP_015078" description="In isoform 2." evidence="10">
    <original>QKKGPG</original>
    <variation>MVPTGV</variation>
    <location>
        <begin position="151"/>
        <end position="156"/>
    </location>
</feature>
<feature type="splice variant" id="VSP_015079" description="In isoform 2." evidence="10">
    <location>
        <begin position="157"/>
        <end position="669"/>
    </location>
</feature>
<feature type="splice variant" id="VSP_047495" description="In isoform 5." evidence="13">
    <location>
        <begin position="340"/>
        <end position="669"/>
    </location>
</feature>
<feature type="sequence conflict" description="In Ref. 1; AAK77961." evidence="14" ref="1">
    <original>S</original>
    <variation>T</variation>
    <location>
        <position position="560"/>
    </location>
</feature>
<feature type="sequence conflict" description="In Ref. 6; BAD96550." evidence="14" ref="6">
    <original>A</original>
    <variation>V</variation>
    <location>
        <position position="609"/>
    </location>
</feature>
<feature type="strand" evidence="27">
    <location>
        <begin position="81"/>
        <end position="85"/>
    </location>
</feature>
<feature type="helix" evidence="27">
    <location>
        <begin position="92"/>
        <end position="102"/>
    </location>
</feature>
<feature type="strand" evidence="27">
    <location>
        <begin position="105"/>
        <end position="110"/>
    </location>
</feature>
<feature type="strand" evidence="27">
    <location>
        <begin position="115"/>
        <end position="120"/>
    </location>
</feature>
<feature type="helix" evidence="27">
    <location>
        <begin position="122"/>
        <end position="132"/>
    </location>
</feature>
<feature type="strand" evidence="27">
    <location>
        <begin position="143"/>
        <end position="147"/>
    </location>
</feature>
<keyword id="KW-0002">3D-structure</keyword>
<keyword id="KW-0007">Acetylation</keyword>
<keyword id="KW-0025">Alternative splicing</keyword>
<keyword id="KW-0963">Cytoplasm</keyword>
<keyword id="KW-0391">Immunity</keyword>
<keyword id="KW-0399">Innate immunity</keyword>
<keyword id="KW-1017">Isopeptide bond</keyword>
<keyword id="KW-0539">Nucleus</keyword>
<keyword id="KW-0597">Phosphoprotein</keyword>
<keyword id="KW-1267">Proteomics identification</keyword>
<keyword id="KW-1185">Reference proteome</keyword>
<keyword id="KW-0677">Repeat</keyword>
<keyword id="KW-0678">Repressor</keyword>
<keyword id="KW-0694">RNA-binding</keyword>
<keyword id="KW-0804">Transcription</keyword>
<keyword id="KW-0805">Transcription regulation</keyword>
<keyword id="KW-0832">Ubl conjugation</keyword>
<reference key="1">
    <citation type="journal article" date="2001" name="J. Biol. Chem.">
        <title>Identification and characterization of RRM-containing coactivator activator (CoAA) as TRBP-interacting protein, and its splice variant as a coactivator modulator (CoAM).</title>
        <authorList>
            <person name="Iwasaki T."/>
            <person name="Chin W.W."/>
            <person name="Ko L."/>
        </authorList>
    </citation>
    <scope>NUCLEOTIDE SEQUENCE [MRNA] (ISOFORMS 1 AND 2)</scope>
    <scope>ALTERNATIVE SPLICING</scope>
    <scope>INTERACTION WITH CITED1; NCOA6 AND XRCC5</scope>
</reference>
<reference key="2">
    <citation type="journal article" date="2007" name="Nucleic Acids Res.">
        <title>Switched alternative splicing of oncogene CoAA during embryonal carcinoma stem cell differentiation.</title>
        <authorList>
            <person name="Yang Z."/>
            <person name="Sui Y."/>
            <person name="Xiong S."/>
            <person name="Liour S.S."/>
            <person name="Phillips A.C."/>
            <person name="Ko L."/>
        </authorList>
    </citation>
    <scope>NUCLEOTIDE SEQUENCE [MRNA] (ISOFORM 3)</scope>
</reference>
<reference key="3">
    <citation type="journal article" date="2009" name="J. Biol. Chem.">
        <title>Functional pre- mRNA trans-splicing of coactivator CoAA and corepressor RBM4 during stem/progenitor cell differentiation.</title>
        <authorList>
            <person name="Brooks Y.S."/>
            <person name="Wang G."/>
            <person name="Yang Z."/>
            <person name="Smith K.K."/>
            <person name="Bieberich E."/>
            <person name="Ko L."/>
        </authorList>
    </citation>
    <scope>NUCLEOTIDE SEQUENCE [MRNA] (ISOFORM 5)</scope>
</reference>
<reference key="4">
    <citation type="submission" date="1998-07" db="EMBL/GenBank/DDBJ databases">
        <title>SIP, a novel protein interacting with SYT.</title>
        <authorList>
            <person name="Antonson P."/>
            <person name="Goodwin G."/>
        </authorList>
    </citation>
    <scope>NUCLEOTIDE SEQUENCE [MRNA] (ISOFORM 1)</scope>
    <source>
        <tissue>Synovial sarcoma</tissue>
    </source>
</reference>
<reference key="5">
    <citation type="journal article" date="2004" name="Nat. Genet.">
        <title>Complete sequencing and characterization of 21,243 full-length human cDNAs.</title>
        <authorList>
            <person name="Ota T."/>
            <person name="Suzuki Y."/>
            <person name="Nishikawa T."/>
            <person name="Otsuki T."/>
            <person name="Sugiyama T."/>
            <person name="Irie R."/>
            <person name="Wakamatsu A."/>
            <person name="Hayashi K."/>
            <person name="Sato H."/>
            <person name="Nagai K."/>
            <person name="Kimura K."/>
            <person name="Makita H."/>
            <person name="Sekine M."/>
            <person name="Obayashi M."/>
            <person name="Nishi T."/>
            <person name="Shibahara T."/>
            <person name="Tanaka T."/>
            <person name="Ishii S."/>
            <person name="Yamamoto J."/>
            <person name="Saito K."/>
            <person name="Kawai Y."/>
            <person name="Isono Y."/>
            <person name="Nakamura Y."/>
            <person name="Nagahari K."/>
            <person name="Murakami K."/>
            <person name="Yasuda T."/>
            <person name="Iwayanagi T."/>
            <person name="Wagatsuma M."/>
            <person name="Shiratori A."/>
            <person name="Sudo H."/>
            <person name="Hosoiri T."/>
            <person name="Kaku Y."/>
            <person name="Kodaira H."/>
            <person name="Kondo H."/>
            <person name="Sugawara M."/>
            <person name="Takahashi M."/>
            <person name="Kanda K."/>
            <person name="Yokoi T."/>
            <person name="Furuya T."/>
            <person name="Kikkawa E."/>
            <person name="Omura Y."/>
            <person name="Abe K."/>
            <person name="Kamihara K."/>
            <person name="Katsuta N."/>
            <person name="Sato K."/>
            <person name="Tanikawa M."/>
            <person name="Yamazaki M."/>
            <person name="Ninomiya K."/>
            <person name="Ishibashi T."/>
            <person name="Yamashita H."/>
            <person name="Murakawa K."/>
            <person name="Fujimori K."/>
            <person name="Tanai H."/>
            <person name="Kimata M."/>
            <person name="Watanabe M."/>
            <person name="Hiraoka S."/>
            <person name="Chiba Y."/>
            <person name="Ishida S."/>
            <person name="Ono Y."/>
            <person name="Takiguchi S."/>
            <person name="Watanabe S."/>
            <person name="Yosida M."/>
            <person name="Hotuta T."/>
            <person name="Kusano J."/>
            <person name="Kanehori K."/>
            <person name="Takahashi-Fujii A."/>
            <person name="Hara H."/>
            <person name="Tanase T.-O."/>
            <person name="Nomura Y."/>
            <person name="Togiya S."/>
            <person name="Komai F."/>
            <person name="Hara R."/>
            <person name="Takeuchi K."/>
            <person name="Arita M."/>
            <person name="Imose N."/>
            <person name="Musashino K."/>
            <person name="Yuuki H."/>
            <person name="Oshima A."/>
            <person name="Sasaki N."/>
            <person name="Aotsuka S."/>
            <person name="Yoshikawa Y."/>
            <person name="Matsunawa H."/>
            <person name="Ichihara T."/>
            <person name="Shiohata N."/>
            <person name="Sano S."/>
            <person name="Moriya S."/>
            <person name="Momiyama H."/>
            <person name="Satoh N."/>
            <person name="Takami S."/>
            <person name="Terashima Y."/>
            <person name="Suzuki O."/>
            <person name="Nakagawa S."/>
            <person name="Senoh A."/>
            <person name="Mizoguchi H."/>
            <person name="Goto Y."/>
            <person name="Shimizu F."/>
            <person name="Wakebe H."/>
            <person name="Hishigaki H."/>
            <person name="Watanabe T."/>
            <person name="Sugiyama A."/>
            <person name="Takemoto M."/>
            <person name="Kawakami B."/>
            <person name="Yamazaki M."/>
            <person name="Watanabe K."/>
            <person name="Kumagai A."/>
            <person name="Itakura S."/>
            <person name="Fukuzumi Y."/>
            <person name="Fujimori Y."/>
            <person name="Komiyama M."/>
            <person name="Tashiro H."/>
            <person name="Tanigami A."/>
            <person name="Fujiwara T."/>
            <person name="Ono T."/>
            <person name="Yamada K."/>
            <person name="Fujii Y."/>
            <person name="Ozaki K."/>
            <person name="Hirao M."/>
            <person name="Ohmori Y."/>
            <person name="Kawabata A."/>
            <person name="Hikiji T."/>
            <person name="Kobatake N."/>
            <person name="Inagaki H."/>
            <person name="Ikema Y."/>
            <person name="Okamoto S."/>
            <person name="Okitani R."/>
            <person name="Kawakami T."/>
            <person name="Noguchi S."/>
            <person name="Itoh T."/>
            <person name="Shigeta K."/>
            <person name="Senba T."/>
            <person name="Matsumura K."/>
            <person name="Nakajima Y."/>
            <person name="Mizuno T."/>
            <person name="Morinaga M."/>
            <person name="Sasaki M."/>
            <person name="Togashi T."/>
            <person name="Oyama M."/>
            <person name="Hata H."/>
            <person name="Watanabe M."/>
            <person name="Komatsu T."/>
            <person name="Mizushima-Sugano J."/>
            <person name="Satoh T."/>
            <person name="Shirai Y."/>
            <person name="Takahashi Y."/>
            <person name="Nakagawa K."/>
            <person name="Okumura K."/>
            <person name="Nagase T."/>
            <person name="Nomura N."/>
            <person name="Kikuchi H."/>
            <person name="Masuho Y."/>
            <person name="Yamashita R."/>
            <person name="Nakai K."/>
            <person name="Yada T."/>
            <person name="Nakamura Y."/>
            <person name="Ohara O."/>
            <person name="Isogai T."/>
            <person name="Sugano S."/>
        </authorList>
    </citation>
    <scope>NUCLEOTIDE SEQUENCE [LARGE SCALE MRNA] (ISOFORM 1)</scope>
    <source>
        <tissue>Embryo</tissue>
    </source>
</reference>
<reference key="6">
    <citation type="submission" date="2005-04" db="EMBL/GenBank/DDBJ databases">
        <authorList>
            <person name="Suzuki Y."/>
            <person name="Sugano S."/>
            <person name="Totoki Y."/>
            <person name="Toyoda A."/>
            <person name="Takeda T."/>
            <person name="Sakaki Y."/>
            <person name="Tanaka A."/>
            <person name="Yokoyama S."/>
        </authorList>
    </citation>
    <scope>NUCLEOTIDE SEQUENCE [LARGE SCALE MRNA] (ISOFORM 1)</scope>
    <source>
        <tissue>Liver</tissue>
    </source>
</reference>
<reference key="7">
    <citation type="journal article" date="2006" name="Nature">
        <title>Human chromosome 11 DNA sequence and analysis including novel gene identification.</title>
        <authorList>
            <person name="Taylor T.D."/>
            <person name="Noguchi H."/>
            <person name="Totoki Y."/>
            <person name="Toyoda A."/>
            <person name="Kuroki Y."/>
            <person name="Dewar K."/>
            <person name="Lloyd C."/>
            <person name="Itoh T."/>
            <person name="Takeda T."/>
            <person name="Kim D.-W."/>
            <person name="She X."/>
            <person name="Barlow K.F."/>
            <person name="Bloom T."/>
            <person name="Bruford E."/>
            <person name="Chang J.L."/>
            <person name="Cuomo C.A."/>
            <person name="Eichler E."/>
            <person name="FitzGerald M.G."/>
            <person name="Jaffe D.B."/>
            <person name="LaButti K."/>
            <person name="Nicol R."/>
            <person name="Park H.-S."/>
            <person name="Seaman C."/>
            <person name="Sougnez C."/>
            <person name="Yang X."/>
            <person name="Zimmer A.R."/>
            <person name="Zody M.C."/>
            <person name="Birren B.W."/>
            <person name="Nusbaum C."/>
            <person name="Fujiyama A."/>
            <person name="Hattori M."/>
            <person name="Rogers J."/>
            <person name="Lander E.S."/>
            <person name="Sakaki Y."/>
        </authorList>
    </citation>
    <scope>NUCLEOTIDE SEQUENCE [LARGE SCALE GENOMIC DNA]</scope>
</reference>
<reference key="8">
    <citation type="submission" date="2005-07" db="EMBL/GenBank/DDBJ databases">
        <authorList>
            <person name="Mural R.J."/>
            <person name="Istrail S."/>
            <person name="Sutton G.G."/>
            <person name="Florea L."/>
            <person name="Halpern A.L."/>
            <person name="Mobarry C.M."/>
            <person name="Lippert R."/>
            <person name="Walenz B."/>
            <person name="Shatkay H."/>
            <person name="Dew I."/>
            <person name="Miller J.R."/>
            <person name="Flanigan M.J."/>
            <person name="Edwards N.J."/>
            <person name="Bolanos R."/>
            <person name="Fasulo D."/>
            <person name="Halldorsson B.V."/>
            <person name="Hannenhalli S."/>
            <person name="Turner R."/>
            <person name="Yooseph S."/>
            <person name="Lu F."/>
            <person name="Nusskern D.R."/>
            <person name="Shue B.C."/>
            <person name="Zheng X.H."/>
            <person name="Zhong F."/>
            <person name="Delcher A.L."/>
            <person name="Huson D.H."/>
            <person name="Kravitz S.A."/>
            <person name="Mouchard L."/>
            <person name="Reinert K."/>
            <person name="Remington K.A."/>
            <person name="Clark A.G."/>
            <person name="Waterman M.S."/>
            <person name="Eichler E.E."/>
            <person name="Adams M.D."/>
            <person name="Hunkapiller M.W."/>
            <person name="Myers E.W."/>
            <person name="Venter J.C."/>
        </authorList>
    </citation>
    <scope>NUCLEOTIDE SEQUENCE [LARGE SCALE GENOMIC DNA]</scope>
</reference>
<reference key="9">
    <citation type="journal article" date="2004" name="Genome Res.">
        <title>The status, quality, and expansion of the NIH full-length cDNA project: the Mammalian Gene Collection (MGC).</title>
        <authorList>
            <consortium name="The MGC Project Team"/>
        </authorList>
    </citation>
    <scope>NUCLEOTIDE SEQUENCE [LARGE SCALE MRNA] (ISOFORMS 1 AND 3)</scope>
    <source>
        <tissue>Leiomyosarcoma</tissue>
        <tissue>Lung</tissue>
    </source>
</reference>
<reference key="10">
    <citation type="journal article" date="2007" name="BMC Genomics">
        <title>The full-ORF clone resource of the German cDNA consortium.</title>
        <authorList>
            <person name="Bechtel S."/>
            <person name="Rosenfelder H."/>
            <person name="Duda A."/>
            <person name="Schmidt C.P."/>
            <person name="Ernst U."/>
            <person name="Wellenreuther R."/>
            <person name="Mehrle A."/>
            <person name="Schuster C."/>
            <person name="Bahr A."/>
            <person name="Bloecker H."/>
            <person name="Heubner D."/>
            <person name="Hoerlein A."/>
            <person name="Michel G."/>
            <person name="Wedler H."/>
            <person name="Koehrer K."/>
            <person name="Ottenwaelder B."/>
            <person name="Poustka A."/>
            <person name="Wiemann S."/>
            <person name="Schupp I."/>
        </authorList>
    </citation>
    <scope>NUCLEOTIDE SEQUENCE [LARGE SCALE MRNA] OF 601-669</scope>
    <source>
        <tissue>Liver</tissue>
    </source>
</reference>
<reference key="11">
    <citation type="journal article" date="2002" name="Curr. Biol.">
        <title>Paraspeckles: a novel nuclear domain.</title>
        <authorList>
            <person name="Fox A.H."/>
            <person name="Lam Y.W."/>
            <person name="Leung A.K.L."/>
            <person name="Lyon C.E."/>
            <person name="Andersen J."/>
            <person name="Mann M."/>
            <person name="Lamond A.I."/>
        </authorList>
    </citation>
    <scope>SUBCELLULAR LOCATION</scope>
</reference>
<reference key="12">
    <citation type="journal article" date="2004" name="Anal. Chem.">
        <title>Robust phosphoproteomic profiling of tyrosine phosphorylation sites from human T cells using immobilized metal affinity chromatography and tandem mass spectrometry.</title>
        <authorList>
            <person name="Brill L.M."/>
            <person name="Salomon A.R."/>
            <person name="Ficarro S.B."/>
            <person name="Mukherji M."/>
            <person name="Stettler-Gill M."/>
            <person name="Peters E.C."/>
        </authorList>
    </citation>
    <scope>PHOSPHORYLATION [LARGE SCALE ANALYSIS] AT THR-206</scope>
    <scope>IDENTIFICATION BY MASS SPECTROMETRY [LARGE SCALE ANALYSIS]</scope>
    <source>
        <tissue>Leukemic T-cell</tissue>
    </source>
</reference>
<reference key="13">
    <citation type="journal article" date="2005" name="Endocrinology">
        <title>Synovial sarcoma translocation (SYT) encodes a nuclear receptor coactivator.</title>
        <authorList>
            <person name="Iwasaki T."/>
            <person name="Koibuchi N."/>
            <person name="Chin W.W."/>
        </authorList>
    </citation>
    <scope>INTERACTION WITH SS18</scope>
</reference>
<reference key="14">
    <citation type="journal article" date="2006" name="Cell">
        <title>Global, in vivo, and site-specific phosphorylation dynamics in signaling networks.</title>
        <authorList>
            <person name="Olsen J.V."/>
            <person name="Blagoev B."/>
            <person name="Gnad F."/>
            <person name="Macek B."/>
            <person name="Kumar C."/>
            <person name="Mortensen P."/>
            <person name="Mann M."/>
        </authorList>
    </citation>
    <scope>PHOSPHORYLATION [LARGE SCALE ANALYSIS] AT THR-206</scope>
    <scope>IDENTIFICATION BY MASS SPECTROMETRY [LARGE SCALE ANALYSIS]</scope>
    <source>
        <tissue>Cervix carcinoma</tissue>
    </source>
</reference>
<reference key="15">
    <citation type="journal article" date="2007" name="Science">
        <title>ATM and ATR substrate analysis reveals extensive protein networks responsive to DNA damage.</title>
        <authorList>
            <person name="Matsuoka S."/>
            <person name="Ballif B.A."/>
            <person name="Smogorzewska A."/>
            <person name="McDonald E.R. III"/>
            <person name="Hurov K.E."/>
            <person name="Luo J."/>
            <person name="Bakalarski C.E."/>
            <person name="Zhao Z."/>
            <person name="Solimini N."/>
            <person name="Lerenthal Y."/>
            <person name="Shiloh Y."/>
            <person name="Gygi S.P."/>
            <person name="Elledge S.J."/>
        </authorList>
    </citation>
    <scope>PHOSPHORYLATION [LARGE SCALE ANALYSIS] AT SER-562</scope>
    <scope>IDENTIFICATION BY MASS SPECTROMETRY [LARGE SCALE ANALYSIS]</scope>
    <source>
        <tissue>Embryonic kidney</tissue>
    </source>
</reference>
<reference key="16">
    <citation type="journal article" date="2008" name="J. Proteome Res.">
        <title>Combining protein-based IMAC, peptide-based IMAC, and MudPIT for efficient phosphoproteomic analysis.</title>
        <authorList>
            <person name="Cantin G.T."/>
            <person name="Yi W."/>
            <person name="Lu B."/>
            <person name="Park S.K."/>
            <person name="Xu T."/>
            <person name="Lee J.-D."/>
            <person name="Yates J.R. III"/>
        </authorList>
    </citation>
    <scope>IDENTIFICATION BY MASS SPECTROMETRY [LARGE SCALE ANALYSIS]</scope>
    <source>
        <tissue>Cervix carcinoma</tissue>
    </source>
</reference>
<reference key="17">
    <citation type="journal article" date="2008" name="J. Proteome Res.">
        <title>Phosphorylation analysis of primary human T lymphocytes using sequential IMAC and titanium oxide enrichment.</title>
        <authorList>
            <person name="Carrascal M."/>
            <person name="Ovelleiro D."/>
            <person name="Casas V."/>
            <person name="Gay M."/>
            <person name="Abian J."/>
        </authorList>
    </citation>
    <scope>IDENTIFICATION BY MASS SPECTROMETRY [LARGE SCALE ANALYSIS]</scope>
    <source>
        <tissue>T-cell</tissue>
    </source>
</reference>
<reference key="18">
    <citation type="journal article" date="2008" name="Mol. Cell">
        <title>Kinase-selective enrichment enables quantitative phosphoproteomics of the kinome across the cell cycle.</title>
        <authorList>
            <person name="Daub H."/>
            <person name="Olsen J.V."/>
            <person name="Bairlein M."/>
            <person name="Gnad F."/>
            <person name="Oppermann F.S."/>
            <person name="Korner R."/>
            <person name="Greff Z."/>
            <person name="Keri G."/>
            <person name="Stemmann O."/>
            <person name="Mann M."/>
        </authorList>
    </citation>
    <scope>PHOSPHORYLATION [LARGE SCALE ANALYSIS] AT THR-206</scope>
    <scope>IDENTIFICATION BY MASS SPECTROMETRY [LARGE SCALE ANALYSIS]</scope>
    <source>
        <tissue>Cervix carcinoma</tissue>
    </source>
</reference>
<reference key="19">
    <citation type="journal article" date="2008" name="Proc. Natl. Acad. Sci. U.S.A.">
        <title>A quantitative atlas of mitotic phosphorylation.</title>
        <authorList>
            <person name="Dephoure N."/>
            <person name="Zhou C."/>
            <person name="Villen J."/>
            <person name="Beausoleil S.A."/>
            <person name="Bakalarski C.E."/>
            <person name="Elledge S.J."/>
            <person name="Gygi S.P."/>
        </authorList>
    </citation>
    <scope>PHOSPHORYLATION [LARGE SCALE ANALYSIS] AT SER-256 AND SER-618</scope>
    <scope>IDENTIFICATION BY MASS SPECTROMETRY [LARGE SCALE ANALYSIS]</scope>
    <source>
        <tissue>Cervix carcinoma</tissue>
    </source>
</reference>
<reference key="20">
    <citation type="journal article" date="2009" name="Anal. Chem.">
        <title>Lys-N and trypsin cover complementary parts of the phosphoproteome in a refined SCX-based approach.</title>
        <authorList>
            <person name="Gauci S."/>
            <person name="Helbig A.O."/>
            <person name="Slijper M."/>
            <person name="Krijgsveld J."/>
            <person name="Heck A.J."/>
            <person name="Mohammed S."/>
        </authorList>
    </citation>
    <scope>IDENTIFICATION BY MASS SPECTROMETRY [LARGE SCALE ANALYSIS]</scope>
</reference>
<reference key="21">
    <citation type="journal article" date="2009" name="Sci. Signal.">
        <title>Quantitative phosphoproteomic analysis of T cell receptor signaling reveals system-wide modulation of protein-protein interactions.</title>
        <authorList>
            <person name="Mayya V."/>
            <person name="Lundgren D.H."/>
            <person name="Hwang S.-I."/>
            <person name="Rezaul K."/>
            <person name="Wu L."/>
            <person name="Eng J.K."/>
            <person name="Rodionov V."/>
            <person name="Han D.K."/>
        </authorList>
    </citation>
    <scope>PHOSPHORYLATION [LARGE SCALE ANALYSIS] AT THR-572</scope>
    <scope>IDENTIFICATION BY MASS SPECTROMETRY [LARGE SCALE ANALYSIS]</scope>
    <source>
        <tissue>Leukemic T-cell</tissue>
    </source>
</reference>
<reference key="22">
    <citation type="journal article" date="2010" name="Sci. Signal.">
        <title>Quantitative phosphoproteomics reveals widespread full phosphorylation site occupancy during mitosis.</title>
        <authorList>
            <person name="Olsen J.V."/>
            <person name="Vermeulen M."/>
            <person name="Santamaria A."/>
            <person name="Kumar C."/>
            <person name="Miller M.L."/>
            <person name="Jensen L.J."/>
            <person name="Gnad F."/>
            <person name="Cox J."/>
            <person name="Jensen T.S."/>
            <person name="Nigg E.A."/>
            <person name="Brunak S."/>
            <person name="Mann M."/>
        </authorList>
    </citation>
    <scope>PHOSPHORYLATION [LARGE SCALE ANALYSIS] AT SER-161; THR-206 AND SER-618</scope>
    <scope>IDENTIFICATION BY MASS SPECTROMETRY [LARGE SCALE ANALYSIS]</scope>
    <source>
        <tissue>Cervix carcinoma</tissue>
    </source>
</reference>
<reference key="23">
    <citation type="journal article" date="2011" name="BMC Syst. Biol.">
        <title>Initial characterization of the human central proteome.</title>
        <authorList>
            <person name="Burkard T.R."/>
            <person name="Planyavsky M."/>
            <person name="Kaupe I."/>
            <person name="Breitwieser F.P."/>
            <person name="Buerckstuemmer T."/>
            <person name="Bennett K.L."/>
            <person name="Superti-Furga G."/>
            <person name="Colinge J."/>
        </authorList>
    </citation>
    <scope>IDENTIFICATION BY MASS SPECTROMETRY [LARGE SCALE ANALYSIS]</scope>
</reference>
<reference key="24">
    <citation type="journal article" date="2011" name="Sci. Signal.">
        <title>System-wide temporal characterization of the proteome and phosphoproteome of human embryonic stem cell differentiation.</title>
        <authorList>
            <person name="Rigbolt K.T."/>
            <person name="Prokhorova T.A."/>
            <person name="Akimov V."/>
            <person name="Henningsen J."/>
            <person name="Johansen P.T."/>
            <person name="Kratchmarova I."/>
            <person name="Kassem M."/>
            <person name="Mann M."/>
            <person name="Olsen J.V."/>
            <person name="Blagoev B."/>
        </authorList>
    </citation>
    <scope>PHOSPHORYLATION [LARGE SCALE ANALYSIS] AT SER-220</scope>
    <scope>IDENTIFICATION BY MASS SPECTROMETRY [LARGE SCALE ANALYSIS]</scope>
</reference>
<reference key="25">
    <citation type="journal article" date="2012" name="Mol. Cell. Proteomics">
        <title>Systematic analysis of protein pools, isoforms, and modifications affecting turnover and subcellular localization.</title>
        <authorList>
            <person name="Ahmad Y."/>
            <person name="Boisvert F.M."/>
            <person name="Lundberg E."/>
            <person name="Uhlen M."/>
            <person name="Lamond A.I."/>
        </authorList>
    </citation>
    <scope>SUBCELLULAR LOCATION [LARGE SCALE ANALYSIS]</scope>
</reference>
<reference key="26">
    <citation type="journal article" date="2013" name="J. Proteome Res.">
        <title>Toward a comprehensive characterization of a human cancer cell phosphoproteome.</title>
        <authorList>
            <person name="Zhou H."/>
            <person name="Di Palma S."/>
            <person name="Preisinger C."/>
            <person name="Peng M."/>
            <person name="Polat A.N."/>
            <person name="Heck A.J."/>
            <person name="Mohammed S."/>
        </authorList>
    </citation>
    <scope>PHOSPHORYLATION [LARGE SCALE ANALYSIS] AT SER-161; THR-206; SER-220; SER-242; SER-244; SER-256; SER-272; SER-280; SER-520; SER-523; SER-527; SER-582; SER-618; SER-620; SER-623; SER-627; SER-643 AND SER-649</scope>
    <scope>IDENTIFICATION BY MASS SPECTROMETRY [LARGE SCALE ANALYSIS]</scope>
    <source>
        <tissue>Cervix carcinoma</tissue>
        <tissue>Erythroleukemia</tissue>
    </source>
</reference>
<reference key="27">
    <citation type="journal article" date="2014" name="J. Proteomics">
        <title>An enzyme assisted RP-RPLC approach for in-depth analysis of human liver phosphoproteome.</title>
        <authorList>
            <person name="Bian Y."/>
            <person name="Song C."/>
            <person name="Cheng K."/>
            <person name="Dong M."/>
            <person name="Wang F."/>
            <person name="Huang J."/>
            <person name="Sun D."/>
            <person name="Wang L."/>
            <person name="Ye M."/>
            <person name="Zou H."/>
        </authorList>
    </citation>
    <scope>PHOSPHORYLATION [LARGE SCALE ANALYSIS] AT THR-206</scope>
    <scope>IDENTIFICATION BY MASS SPECTROMETRY [LARGE SCALE ANALYSIS]</scope>
    <source>
        <tissue>Liver</tissue>
    </source>
</reference>
<reference key="28">
    <citation type="journal article" date="2014" name="Nat. Struct. Mol. Biol.">
        <title>Uncovering global SUMOylation signaling networks in a site-specific manner.</title>
        <authorList>
            <person name="Hendriks I.A."/>
            <person name="D'Souza R.C."/>
            <person name="Yang B."/>
            <person name="Verlaan-de Vries M."/>
            <person name="Mann M."/>
            <person name="Vertegaal A.C."/>
        </authorList>
    </citation>
    <scope>SUMOYLATION [LARGE SCALE ANALYSIS] AT LYS-126</scope>
    <scope>IDENTIFICATION BY MASS SPECTROMETRY [LARGE SCALE ANALYSIS]</scope>
</reference>
<reference key="29">
    <citation type="journal article" date="2015" name="EMBO J.">
        <title>RBM14 prevents assembly of centriolar protein complexes and maintains mitotic spindle integrity.</title>
        <authorList>
            <person name="Shiratsuchi G."/>
            <person name="Takaoka K."/>
            <person name="Ashikawa T."/>
            <person name="Hamada H."/>
            <person name="Kitagawa D."/>
        </authorList>
    </citation>
    <scope>FUNCTION</scope>
    <scope>SUBCELLULAR LOCATION</scope>
    <scope>INTERACTION WITH STIL AND GAMMA-TUBULIN</scope>
</reference>
<reference key="30">
    <citation type="journal article" date="2017" name="Mol. Cell">
        <title>HEXIM1 and NEAT1 Long non-coding RNA form a multi-subunit complex that regulates DNA-mediated innate immune response.</title>
        <authorList>
            <person name="Morchikh M."/>
            <person name="Cribier A."/>
            <person name="Raffel R."/>
            <person name="Amraoui S."/>
            <person name="Cau J."/>
            <person name="Severac D."/>
            <person name="Dubois E."/>
            <person name="Schwartz O."/>
            <person name="Bennasser Y."/>
            <person name="Benkirane M."/>
        </authorList>
    </citation>
    <scope>FUNCTION</scope>
    <scope>SUBCELLULAR LOCATION</scope>
    <scope>INTERACTION WITH PRKDC; XRCC5; XRCC6; SFPQ; NONO; PSPC1; HEXIM1 AND MATR3</scope>
</reference>
<reference key="31">
    <citation type="journal article" date="2017" name="Nat. Struct. Mol. Biol.">
        <title>Site-specific mapping of the human SUMO proteome reveals co-modification with phosphorylation.</title>
        <authorList>
            <person name="Hendriks I.A."/>
            <person name="Lyon D."/>
            <person name="Young C."/>
            <person name="Jensen L.J."/>
            <person name="Vertegaal A.C."/>
            <person name="Nielsen M.L."/>
        </authorList>
    </citation>
    <scope>SUMOYLATION [LARGE SCALE ANALYSIS] AT LYS-126; LYS-135; LYS-138; LYS-149; LYS-153; LYS-164 AND LYS-600</scope>
    <scope>IDENTIFICATION BY MASS SPECTROMETRY [LARGE SCALE ANALYSIS]</scope>
</reference>
<reference key="32">
    <citation type="journal article" date="2023" name="Nucleic Acids Res.">
        <title>Cell-type specific regulator RBPMS switches alternative splicing via higher-order oligomerization and heterotypic interactions with other splicing regulators.</title>
        <authorList>
            <person name="Yang Y."/>
            <person name="Lee G.C."/>
            <person name="Nakagaki-Silva E."/>
            <person name="Huang Y."/>
            <person name="Peacey M."/>
            <person name="Partridge R."/>
            <person name="Gooding C."/>
            <person name="Smith C.W.J."/>
        </authorList>
    </citation>
    <scope>FUNCTION</scope>
    <scope>INTERACTION WITH RBPMS</scope>
</reference>
<reference key="33">
    <citation type="submission" date="2006-10" db="PDB data bank">
        <title>Solution structure of RNA binding domain 2 in RNA-binding protein 14.</title>
        <authorList>
            <consortium name="RIKEN structural genomics initiative (RSGI)"/>
        </authorList>
    </citation>
    <scope>STRUCTURE BY NMR OF 77-153</scope>
</reference>
<sequence>MKIFVGNVDGADTTPEELAALFAPYGTVMSCAVMKQFAFVHMRENAGALRAIEALHGHELRPGRALVVEMSRPRPLNTWKIFVGNVSAACTSQELRSLFERRGRVIECDVVKDYAFVHMEKEADAKAAIAQLNGKEVKGKRINVELSTKGQKKGPGLAVQSGDKTKKPGAGDTAFPGTGGFSATFDYQQAFGNSTGGFDGQARQPTPPFFGRDRSPLRRSPPRASYVAPLTAQPATYRAQPSVSLGAAYRAQPSASLGVGYRTQPMTAQAASYRAQPSVSLGAPYRGQLASPSSQSAAASSLGPYGGAQPSASALSSYGGQAAAASSLNSYGAQGSSLASYGNQPSSYGAQAASSYGVRAAASSYNTQGAASSLGSYGAQAASYGAQSAASSLAYGAQAASYNAQPSASYNAQSAPYAAQQAASYSSQPAAYVAQPATAAAYASQPAAYAAQATTPMAGSYGAQPVVQTQLNSYGAQASMGLSGSYGAQSAAAATGSYGAAAAYGAQPSATLAAPYRTQSSASLAASYAAQQHPQAAASYRGQPGNAYDGAGQPSAAYLSMSQGAVANANSTPPPYERTRLSPPRASYDDPYKKAVAMSKRYGSDRRLAELSDYRRLSESQLSFRRSPTKSSLDYRRLPDAHSDYARYSGSYNDYLRAAQMHSGYQRRM</sequence>
<organism>
    <name type="scientific">Homo sapiens</name>
    <name type="common">Human</name>
    <dbReference type="NCBI Taxonomy" id="9606"/>
    <lineage>
        <taxon>Eukaryota</taxon>
        <taxon>Metazoa</taxon>
        <taxon>Chordata</taxon>
        <taxon>Craniata</taxon>
        <taxon>Vertebrata</taxon>
        <taxon>Euteleostomi</taxon>
        <taxon>Mammalia</taxon>
        <taxon>Eutheria</taxon>
        <taxon>Euarchontoglires</taxon>
        <taxon>Primates</taxon>
        <taxon>Haplorrhini</taxon>
        <taxon>Catarrhini</taxon>
        <taxon>Hominidae</taxon>
        <taxon>Homo</taxon>
    </lineage>
</organism>
<dbReference type="EMBL" id="AF315632">
    <property type="protein sequence ID" value="AAK77961.1"/>
    <property type="molecule type" value="mRNA"/>
</dbReference>
<dbReference type="EMBL" id="AF315633">
    <property type="protein sequence ID" value="AAK77962.1"/>
    <property type="molecule type" value="mRNA"/>
</dbReference>
<dbReference type="EMBL" id="DQ294957">
    <property type="protein sequence ID" value="ABB99396.1"/>
    <property type="molecule type" value="mRNA"/>
</dbReference>
<dbReference type="EMBL" id="EU287938">
    <property type="protein sequence ID" value="ABY74511.1"/>
    <property type="molecule type" value="mRNA"/>
</dbReference>
<dbReference type="EMBL" id="AF080561">
    <property type="protein sequence ID" value="AAC64058.1"/>
    <property type="molecule type" value="mRNA"/>
</dbReference>
<dbReference type="EMBL" id="AK021768">
    <property type="protein sequence ID" value="BAG51046.1"/>
    <property type="molecule type" value="mRNA"/>
</dbReference>
<dbReference type="EMBL" id="AK222830">
    <property type="protein sequence ID" value="BAD96550.1"/>
    <property type="molecule type" value="mRNA"/>
</dbReference>
<dbReference type="EMBL" id="AP001157">
    <property type="status" value="NOT_ANNOTATED_CDS"/>
    <property type="molecule type" value="Genomic_DNA"/>
</dbReference>
<dbReference type="EMBL" id="CH471076">
    <property type="protein sequence ID" value="EAW74552.1"/>
    <property type="molecule type" value="Genomic_DNA"/>
</dbReference>
<dbReference type="EMBL" id="BC000488">
    <property type="protein sequence ID" value="AAH00488.1"/>
    <property type="molecule type" value="mRNA"/>
</dbReference>
<dbReference type="EMBL" id="BE885635">
    <property type="status" value="NOT_ANNOTATED_CDS"/>
    <property type="molecule type" value="mRNA"/>
</dbReference>
<dbReference type="EMBL" id="CR749306">
    <property type="protein sequence ID" value="CAH18161.1"/>
    <property type="molecule type" value="mRNA"/>
</dbReference>
<dbReference type="CCDS" id="CCDS55772.1">
    <molecule id="Q96PK6-2"/>
</dbReference>
<dbReference type="CCDS" id="CCDS55773.1">
    <molecule id="Q96PK6-4"/>
</dbReference>
<dbReference type="CCDS" id="CCDS8147.1">
    <molecule id="Q96PK6-1"/>
</dbReference>
<dbReference type="RefSeq" id="NP_001185765.1">
    <molecule id="Q96PK6-2"/>
    <property type="nucleotide sequence ID" value="NM_001198836.2"/>
</dbReference>
<dbReference type="RefSeq" id="NP_001185766.1">
    <molecule id="Q96PK6-4"/>
    <property type="nucleotide sequence ID" value="NM_001198837.2"/>
</dbReference>
<dbReference type="RefSeq" id="NP_001185774.1">
    <molecule id="Q96PK6-5"/>
    <property type="nucleotide sequence ID" value="NM_001198845.1"/>
</dbReference>
<dbReference type="RefSeq" id="NP_006319.1">
    <molecule id="Q96PK6-1"/>
    <property type="nucleotide sequence ID" value="NM_006328.4"/>
</dbReference>
<dbReference type="PDB" id="2DNP">
    <property type="method" value="NMR"/>
    <property type="chains" value="A=77-153"/>
</dbReference>
<dbReference type="PDBsum" id="2DNP"/>
<dbReference type="SMR" id="Q96PK6"/>
<dbReference type="BioGRID" id="115700">
    <property type="interactions" value="556"/>
</dbReference>
<dbReference type="BioGRID" id="1529298">
    <property type="interactions" value="110"/>
</dbReference>
<dbReference type="CORUM" id="Q96PK6"/>
<dbReference type="DIP" id="DIP-50126N"/>
<dbReference type="FunCoup" id="Q96PK6">
    <property type="interactions" value="2866"/>
</dbReference>
<dbReference type="IntAct" id="Q96PK6">
    <property type="interactions" value="315"/>
</dbReference>
<dbReference type="MINT" id="Q96PK6"/>
<dbReference type="STRING" id="9606.ENSP00000311747"/>
<dbReference type="GlyConnect" id="2869">
    <property type="glycosylation" value="1 O-GlcNAc glycan (4 sites)"/>
</dbReference>
<dbReference type="GlyCosmos" id="Q96PK6">
    <property type="glycosylation" value="20 sites, 2 glycans"/>
</dbReference>
<dbReference type="GlyGen" id="Q96PK6">
    <property type="glycosylation" value="26 sites, 2 N-linked glycans (2 sites), 2 O-linked glycans (24 sites)"/>
</dbReference>
<dbReference type="iPTMnet" id="Q96PK6"/>
<dbReference type="MetOSite" id="Q96PK6"/>
<dbReference type="PhosphoSitePlus" id="Q96PK6"/>
<dbReference type="SwissPalm" id="Q96PK6"/>
<dbReference type="BioMuta" id="RBM14"/>
<dbReference type="DMDM" id="73913750"/>
<dbReference type="jPOST" id="Q96PK6"/>
<dbReference type="MassIVE" id="Q96PK6"/>
<dbReference type="PaxDb" id="9606-ENSP00000311747"/>
<dbReference type="PeptideAtlas" id="Q96PK6"/>
<dbReference type="ProteomicsDB" id="14669"/>
<dbReference type="ProteomicsDB" id="2553"/>
<dbReference type="ProteomicsDB" id="61433"/>
<dbReference type="ProteomicsDB" id="77704">
    <molecule id="Q96PK6-1"/>
</dbReference>
<dbReference type="ProteomicsDB" id="77705">
    <molecule id="Q96PK6-2"/>
</dbReference>
<dbReference type="Pumba" id="Q96PK6"/>
<dbReference type="Antibodypedia" id="34813">
    <property type="antibodies" value="223 antibodies from 28 providers"/>
</dbReference>
<dbReference type="DNASU" id="10432"/>
<dbReference type="Ensembl" id="ENST00000310137.5">
    <molecule id="Q96PK6-1"/>
    <property type="protein sequence ID" value="ENSP00000311747.5"/>
    <property type="gene ID" value="ENSG00000239306.5"/>
</dbReference>
<dbReference type="Ensembl" id="ENST00000393979.3">
    <molecule id="Q96PK6-2"/>
    <property type="protein sequence ID" value="ENSP00000377548.3"/>
    <property type="gene ID" value="ENSG00000239306.5"/>
</dbReference>
<dbReference type="Ensembl" id="ENST00000409738.4">
    <molecule id="Q96PK6-4"/>
    <property type="protein sequence ID" value="ENSP00000386995.4"/>
    <property type="gene ID" value="ENSG00000239306.5"/>
</dbReference>
<dbReference type="GeneID" id="100526737"/>
<dbReference type="GeneID" id="10432"/>
<dbReference type="KEGG" id="hsa:100526737"/>
<dbReference type="KEGG" id="hsa:10432"/>
<dbReference type="MANE-Select" id="ENST00000310137.5">
    <property type="protein sequence ID" value="ENSP00000311747.5"/>
    <property type="RefSeq nucleotide sequence ID" value="NM_006328.4"/>
    <property type="RefSeq protein sequence ID" value="NP_006319.1"/>
</dbReference>
<dbReference type="UCSC" id="uc001oit.4">
    <molecule id="Q96PK6-1"/>
    <property type="organism name" value="human"/>
</dbReference>
<dbReference type="AGR" id="HGNC:14219"/>
<dbReference type="AGR" id="HGNC:38840"/>
<dbReference type="CTD" id="100526737"/>
<dbReference type="CTD" id="10432"/>
<dbReference type="DisGeNET" id="100526737"/>
<dbReference type="DisGeNET" id="10432"/>
<dbReference type="GeneCards" id="RBM14"/>
<dbReference type="HGNC" id="HGNC:14219">
    <property type="gene designation" value="RBM14"/>
</dbReference>
<dbReference type="HPA" id="ENSG00000239306">
    <property type="expression patterns" value="Low tissue specificity"/>
</dbReference>
<dbReference type="MIM" id="612409">
    <property type="type" value="gene"/>
</dbReference>
<dbReference type="neXtProt" id="NX_Q96PK6"/>
<dbReference type="OpenTargets" id="ENSG00000239306"/>
<dbReference type="OpenTargets" id="ENSG00000248643"/>
<dbReference type="PharmGKB" id="PA34263"/>
<dbReference type="VEuPathDB" id="HostDB:ENSG00000239306"/>
<dbReference type="eggNOG" id="ENOG502R6FF">
    <property type="taxonomic scope" value="Eukaryota"/>
</dbReference>
<dbReference type="GeneTree" id="ENSGT00940000157436"/>
<dbReference type="HOGENOM" id="CLU_473775_0_0_1"/>
<dbReference type="InParanoid" id="Q96PK6"/>
<dbReference type="OrthoDB" id="1879688at2759"/>
<dbReference type="PAN-GO" id="Q96PK6">
    <property type="GO annotations" value="3 GO annotations based on evolutionary models"/>
</dbReference>
<dbReference type="PhylomeDB" id="Q96PK6"/>
<dbReference type="TreeFam" id="TF320661"/>
<dbReference type="PathwayCommons" id="Q96PK6"/>
<dbReference type="Reactome" id="R-HSA-8941326">
    <property type="pathway name" value="RUNX2 regulates bone development"/>
</dbReference>
<dbReference type="SignaLink" id="Q96PK6"/>
<dbReference type="BioGRID-ORCS" id="100526737">
    <property type="hits" value="81 hits in 332 CRISPR screens"/>
</dbReference>
<dbReference type="BioGRID-ORCS" id="10432">
    <property type="hits" value="792 hits in 1137 CRISPR screens"/>
</dbReference>
<dbReference type="CD-CODE" id="1A18FFC4">
    <property type="entry name" value="Paraspeckle"/>
</dbReference>
<dbReference type="CD-CODE" id="232F8A39">
    <property type="entry name" value="P-body"/>
</dbReference>
<dbReference type="CD-CODE" id="91857CE7">
    <property type="entry name" value="Nucleolus"/>
</dbReference>
<dbReference type="ChiTaRS" id="RBM14">
    <property type="organism name" value="human"/>
</dbReference>
<dbReference type="EvolutionaryTrace" id="Q96PK6"/>
<dbReference type="GeneWiki" id="RBM14"/>
<dbReference type="Pharos" id="Q96PK6">
    <property type="development level" value="Tbio"/>
</dbReference>
<dbReference type="PRO" id="PR:Q96PK6"/>
<dbReference type="Proteomes" id="UP000005640">
    <property type="component" value="Chromosome 11"/>
</dbReference>
<dbReference type="RNAct" id="Q96PK6">
    <property type="molecule type" value="protein"/>
</dbReference>
<dbReference type="Bgee" id="ENSG00000239306">
    <property type="expression patterns" value="Expressed in right uterine tube and 158 other cell types or tissues"/>
</dbReference>
<dbReference type="ExpressionAtlas" id="Q96PK6">
    <property type="expression patterns" value="baseline and differential"/>
</dbReference>
<dbReference type="GO" id="GO:0005737">
    <property type="term" value="C:cytoplasm"/>
    <property type="evidence" value="ECO:0000314"/>
    <property type="project" value="UniProtKB"/>
</dbReference>
<dbReference type="GO" id="GO:0016607">
    <property type="term" value="C:nuclear speck"/>
    <property type="evidence" value="ECO:0000314"/>
    <property type="project" value="HPA"/>
</dbReference>
<dbReference type="GO" id="GO:0005730">
    <property type="term" value="C:nucleolus"/>
    <property type="evidence" value="ECO:0007669"/>
    <property type="project" value="UniProtKB-SubCell"/>
</dbReference>
<dbReference type="GO" id="GO:0005654">
    <property type="term" value="C:nucleoplasm"/>
    <property type="evidence" value="ECO:0000304"/>
    <property type="project" value="Reactome"/>
</dbReference>
<dbReference type="GO" id="GO:0005634">
    <property type="term" value="C:nucleus"/>
    <property type="evidence" value="ECO:0000314"/>
    <property type="project" value="UniProtKB"/>
</dbReference>
<dbReference type="GO" id="GO:1990904">
    <property type="term" value="C:ribonucleoprotein complex"/>
    <property type="evidence" value="ECO:0000304"/>
    <property type="project" value="UniProtKB"/>
</dbReference>
<dbReference type="GO" id="GO:0005667">
    <property type="term" value="C:transcription regulator complex"/>
    <property type="evidence" value="ECO:0000353"/>
    <property type="project" value="UniProtKB"/>
</dbReference>
<dbReference type="GO" id="GO:0003729">
    <property type="term" value="F:mRNA binding"/>
    <property type="evidence" value="ECO:0007669"/>
    <property type="project" value="Ensembl"/>
</dbReference>
<dbReference type="GO" id="GO:0003723">
    <property type="term" value="F:RNA binding"/>
    <property type="evidence" value="ECO:0007005"/>
    <property type="project" value="UniProtKB"/>
</dbReference>
<dbReference type="GO" id="GO:1990935">
    <property type="term" value="F:splicing factor binding"/>
    <property type="evidence" value="ECO:0007669"/>
    <property type="project" value="Ensembl"/>
</dbReference>
<dbReference type="GO" id="GO:0003713">
    <property type="term" value="F:transcription coactivator activity"/>
    <property type="evidence" value="ECO:0000353"/>
    <property type="project" value="UniProtKB"/>
</dbReference>
<dbReference type="GO" id="GO:0002218">
    <property type="term" value="P:activation of innate immune response"/>
    <property type="evidence" value="ECO:0000314"/>
    <property type="project" value="UniProtKB"/>
</dbReference>
<dbReference type="GO" id="GO:0006915">
    <property type="term" value="P:apoptotic process"/>
    <property type="evidence" value="ECO:0007669"/>
    <property type="project" value="Ensembl"/>
</dbReference>
<dbReference type="GO" id="GO:0098534">
    <property type="term" value="P:centriole assembly"/>
    <property type="evidence" value="ECO:0000315"/>
    <property type="project" value="UniProtKB"/>
</dbReference>
<dbReference type="GO" id="GO:0007369">
    <property type="term" value="P:gastrulation"/>
    <property type="evidence" value="ECO:0007669"/>
    <property type="project" value="Ensembl"/>
</dbReference>
<dbReference type="GO" id="GO:0045087">
    <property type="term" value="P:innate immune response"/>
    <property type="evidence" value="ECO:0007669"/>
    <property type="project" value="UniProtKB-KW"/>
</dbReference>
<dbReference type="GO" id="GO:0000398">
    <property type="term" value="P:mRNA splicing, via spliceosome"/>
    <property type="evidence" value="ECO:0007669"/>
    <property type="project" value="Ensembl"/>
</dbReference>
<dbReference type="GO" id="GO:0046600">
    <property type="term" value="P:negative regulation of centriole replication"/>
    <property type="evidence" value="ECO:0000315"/>
    <property type="project" value="CACAO"/>
</dbReference>
<dbReference type="GO" id="GO:0045944">
    <property type="term" value="P:positive regulation of transcription by RNA polymerase II"/>
    <property type="evidence" value="ECO:0000314"/>
    <property type="project" value="UniProtKB"/>
</dbReference>
<dbReference type="GO" id="GO:1902151">
    <property type="term" value="P:regulation of response to DNA integrity checkpoint signaling"/>
    <property type="evidence" value="ECO:0007669"/>
    <property type="project" value="Ensembl"/>
</dbReference>
<dbReference type="GO" id="GO:0009725">
    <property type="term" value="P:response to hormone"/>
    <property type="evidence" value="ECO:0000304"/>
    <property type="project" value="UniProtKB"/>
</dbReference>
<dbReference type="GO" id="GO:0045815">
    <property type="term" value="P:transcription initiation-coupled chromatin remodeling"/>
    <property type="evidence" value="ECO:0000353"/>
    <property type="project" value="UniProtKB"/>
</dbReference>
<dbReference type="CDD" id="cd12608">
    <property type="entry name" value="RRM1_CoAA"/>
    <property type="match status" value="1"/>
</dbReference>
<dbReference type="CDD" id="cd12609">
    <property type="entry name" value="RRM2_CoAA"/>
    <property type="match status" value="1"/>
</dbReference>
<dbReference type="FunFam" id="3.30.70.330:FF:000046">
    <property type="entry name" value="RNA-binding protein 14 isoform X1"/>
    <property type="match status" value="2"/>
</dbReference>
<dbReference type="Gene3D" id="3.30.70.330">
    <property type="match status" value="2"/>
</dbReference>
<dbReference type="InterPro" id="IPR012677">
    <property type="entry name" value="Nucleotide-bd_a/b_plait_sf"/>
</dbReference>
<dbReference type="InterPro" id="IPR035979">
    <property type="entry name" value="RBD_domain_sf"/>
</dbReference>
<dbReference type="InterPro" id="IPR034506">
    <property type="entry name" value="RBM14_RRM1"/>
</dbReference>
<dbReference type="InterPro" id="IPR034507">
    <property type="entry name" value="RBM14_RRM2"/>
</dbReference>
<dbReference type="InterPro" id="IPR000504">
    <property type="entry name" value="RRM_dom"/>
</dbReference>
<dbReference type="InterPro" id="IPR050907">
    <property type="entry name" value="SRSF"/>
</dbReference>
<dbReference type="PANTHER" id="PTHR23147">
    <property type="entry name" value="SERINE/ARGININE RICH SPLICING FACTOR"/>
    <property type="match status" value="1"/>
</dbReference>
<dbReference type="Pfam" id="PF00076">
    <property type="entry name" value="RRM_1"/>
    <property type="match status" value="2"/>
</dbReference>
<dbReference type="SMART" id="SM00360">
    <property type="entry name" value="RRM"/>
    <property type="match status" value="2"/>
</dbReference>
<dbReference type="SUPFAM" id="SSF54928">
    <property type="entry name" value="RNA-binding domain, RBD"/>
    <property type="match status" value="2"/>
</dbReference>
<dbReference type="PROSITE" id="PS50102">
    <property type="entry name" value="RRM"/>
    <property type="match status" value="2"/>
</dbReference>
<proteinExistence type="evidence at protein level"/>
<comment type="function">
    <text evidence="4 7 8 9">Isoform 1 may function as a nuclear receptor coactivator, enhancing transcription through other coactivators such as NCOA6 and CITED1. Isoform 2, functions as a transcriptional repressor, modulating transcriptional activities of coactivators including isoform 1, NCOA6 and CITED1 (PubMed:11443112). Regulates centriole biogenesis by suppressing the formation of aberrant centriolar protein complexes in the cytoplasm and thus preserving mitotic spindle integrity. Prevents the formation of the STIL-CPAP complex (which can induce the formation of aberrant centriolar protein complexes) by interfering with the interaction of STIL with CPAP (PubMed:25385835). Plays a role in the regulation of DNA virus-mediated innate immune response by assembling into the HDP-RNP complex, a complex that serves as a platform for IRF3 phosphorylation and subsequent innate immune response activation through the cGAS-STING pathway (PubMed:28712728). Also involved in the regulation of pre-mRNA alternative splicing (PubMed:37548402).</text>
</comment>
<comment type="subunit">
    <text evidence="4 6 7 8 9">Isoform 1: Interacts with NCOA6, CITED1 and XRCC5/KU86 (PubMed:11443112). Isoform 1: Interacts with SS18 isoform 1 (PubMed:15919756). Isoform 1: Interacts with SS18 isoform 2 (PubMed:15919756). Interacts with STIL and interferes with its interaction with CPAP. Interacts with gamma-tubulin (PubMed:25385835). Part of the HDP-RNP complex composed of at least HEXIM1, PRKDC, XRCC5, XRCC6, paraspeckle proteins (SFPQ, NONO, PSPC1, RBM14, and MATR3) and NEAT1 RNA. Interacts with RBPMS; the interaction allows cooperative assembly of RNA-bound stable cell-specific alternative splicing regulatory complexes (PubMed:37548402).</text>
</comment>
<comment type="interaction">
    <interactant intactId="EBI-954272">
        <id>Q96PK6</id>
    </interactant>
    <interactant intactId="EBI-11954292">
        <id>Q86V38</id>
        <label>ATN1</label>
    </interactant>
    <organismsDiffer>false</organismsDiffer>
    <experiments>3</experiments>
</comment>
<comment type="interaction">
    <interactant intactId="EBI-954272">
        <id>Q96PK6</id>
    </interactant>
    <interactant intactId="EBI-349854">
        <id>P13569</id>
        <label>CFTR</label>
    </interactant>
    <organismsDiffer>false</organismsDiffer>
    <experiments>13</experiments>
</comment>
<comment type="interaction">
    <interactant intactId="EBI-954272">
        <id>Q96PK6</id>
    </interactant>
    <interactant intactId="EBI-2872414">
        <id>Q8IUI8</id>
        <label>CRLF3</label>
    </interactant>
    <organismsDiffer>false</organismsDiffer>
    <experiments>3</experiments>
</comment>
<comment type="interaction">
    <interactant intactId="EBI-954272">
        <id>Q96PK6</id>
    </interactant>
    <interactant intactId="EBI-747754">
        <id>P28799</id>
        <label>GRN</label>
    </interactant>
    <organismsDiffer>false</organismsDiffer>
    <experiments>3</experiments>
</comment>
<comment type="interaction">
    <interactant intactId="EBI-954272">
        <id>Q96PK6</id>
    </interactant>
    <interactant intactId="EBI-304185">
        <id>P61978</id>
        <label>HNRNPK</label>
    </interactant>
    <organismsDiffer>false</organismsDiffer>
    <experiments>4</experiments>
</comment>
<comment type="interaction">
    <interactant intactId="EBI-954272">
        <id>Q96PK6</id>
    </interactant>
    <interactant intactId="EBI-7060731">
        <id>P61978-2</id>
        <label>HNRNPK</label>
    </interactant>
    <organismsDiffer>false</organismsDiffer>
    <experiments>4</experiments>
</comment>
<comment type="interaction">
    <interactant intactId="EBI-954272">
        <id>Q96PK6</id>
    </interactant>
    <interactant intactId="EBI-748420">
        <id>Q9NSC5</id>
        <label>HOMER3</label>
    </interactant>
    <organismsDiffer>false</organismsDiffer>
    <experiments>3</experiments>
</comment>
<comment type="interaction">
    <interactant intactId="EBI-954272">
        <id>Q96PK6</id>
    </interactant>
    <interactant intactId="EBI-742808">
        <id>Q5VWX1</id>
        <label>KHDRBS2</label>
    </interactant>
    <organismsDiffer>false</organismsDiffer>
    <experiments>3</experiments>
</comment>
<comment type="interaction">
    <interactant intactId="EBI-954272">
        <id>Q96PK6</id>
    </interactant>
    <interactant intactId="EBI-10975473">
        <id>O60333-2</id>
        <label>KIF1B</label>
    </interactant>
    <organismsDiffer>false</organismsDiffer>
    <experiments>3</experiments>
</comment>
<comment type="interaction">
    <interactant intactId="EBI-954272">
        <id>Q96PK6</id>
    </interactant>
    <interactant intactId="EBI-475646">
        <id>P07196</id>
        <label>NEFL</label>
    </interactant>
    <organismsDiffer>false</organismsDiffer>
    <experiments>3</experiments>
</comment>
<comment type="interaction">
    <interactant intactId="EBI-954272">
        <id>Q96PK6</id>
    </interactant>
    <interactant intactId="EBI-10271199">
        <id>Q8NI38</id>
        <label>NFKBID</label>
    </interactant>
    <organismsDiffer>false</organismsDiffer>
    <experiments>3</experiments>
</comment>
<comment type="interaction">
    <interactant intactId="EBI-954272">
        <id>Q96PK6</id>
    </interactant>
    <interactant intactId="EBI-2512147">
        <id>Q8IUH3</id>
        <label>RBM45</label>
    </interactant>
    <organismsDiffer>false</organismsDiffer>
    <experiments>4</experiments>
</comment>
<comment type="interaction">
    <interactant intactId="EBI-954272">
        <id>Q96PK6</id>
    </interactant>
    <interactant intactId="EBI-396669">
        <id>Q9Y3C5</id>
        <label>RNF11</label>
    </interactant>
    <organismsDiffer>false</organismsDiffer>
    <experiments>3</experiments>
</comment>
<comment type="interaction">
    <interactant intactId="EBI-954272">
        <id>Q96PK6</id>
    </interactant>
    <interactant intactId="EBI-720609">
        <id>O76024</id>
        <label>WFS1</label>
    </interactant>
    <organismsDiffer>false</organismsDiffer>
    <experiments>3</experiments>
</comment>
<comment type="interaction">
    <interactant intactId="EBI-954272">
        <id>Q96PK6</id>
    </interactant>
    <interactant intactId="EBI-25475847">
        <id>PRO_0000449619</id>
        <label>rep</label>
        <dbReference type="UniProtKB" id="P0DTD1"/>
    </interactant>
    <organismsDiffer>true</organismsDiffer>
    <experiments>2</experiments>
</comment>
<comment type="subcellular location">
    <subcellularLocation>
        <location evidence="7">Nucleus</location>
    </subcellularLocation>
    <subcellularLocation>
        <location evidence="5">Nucleus</location>
        <location evidence="5">Nucleolus</location>
    </subcellularLocation>
    <subcellularLocation>
        <location evidence="7">Cytoplasm</location>
    </subcellularLocation>
    <text evidence="5 7">In punctate subnuclear structures often located adjacent to splicing speckles, called paraspeckles (PubMed:11790299). Cytoplasmic localization is crucial for its function in suppressing the formation of aberrant centriolar protein complexes (PubMed:25385835).</text>
</comment>
<comment type="alternative products">
    <event type="alternative splicing"/>
    <isoform>
        <id>Q96PK6-1</id>
        <name>1</name>
        <name>CoAA</name>
        <sequence type="displayed"/>
    </isoform>
    <isoform>
        <id>Q96PK6-2</id>
        <name>2</name>
        <name>CoAM</name>
        <sequence type="described" ref="VSP_015078 VSP_015079"/>
    </isoform>
    <isoform>
        <id>Q96PK6-3</id>
        <name>3</name>
        <sequence type="described" ref="VSP_044641 VSP_044642"/>
    </isoform>
    <isoform>
        <id>Q96PK6-4</id>
        <name>4</name>
        <sequence type="described" ref="VSP_047109 VSP_047110"/>
    </isoform>
    <isoform>
        <id>Q96PK6-5</id>
        <name>5</name>
        <sequence type="described" ref="VSP_047494 VSP_047495"/>
    </isoform>
</comment>
<comment type="tissue specificity">
    <text>Expressed in all tissues tested, including brain, heart, skeletal muscle, colon, thymus, spleen, kidney, liver, small intestine, placenta, lung and peripheral blood lymphocytes.</text>
</comment>
<evidence type="ECO:0000250" key="1">
    <source>
        <dbReference type="UniProtKB" id="Q8C2Q3"/>
    </source>
</evidence>
<evidence type="ECO:0000255" key="2">
    <source>
        <dbReference type="PROSITE-ProRule" id="PRU00176"/>
    </source>
</evidence>
<evidence type="ECO:0000256" key="3">
    <source>
        <dbReference type="SAM" id="MobiDB-lite"/>
    </source>
</evidence>
<evidence type="ECO:0000269" key="4">
    <source>
    </source>
</evidence>
<evidence type="ECO:0000269" key="5">
    <source>
    </source>
</evidence>
<evidence type="ECO:0000269" key="6">
    <source>
    </source>
</evidence>
<evidence type="ECO:0000269" key="7">
    <source>
    </source>
</evidence>
<evidence type="ECO:0000269" key="8">
    <source>
    </source>
</evidence>
<evidence type="ECO:0000269" key="9">
    <source>
    </source>
</evidence>
<evidence type="ECO:0000303" key="10">
    <source>
    </source>
</evidence>
<evidence type="ECO:0000303" key="11">
    <source>
    </source>
</evidence>
<evidence type="ECO:0000303" key="12">
    <source>
    </source>
</evidence>
<evidence type="ECO:0000303" key="13">
    <source>
    </source>
</evidence>
<evidence type="ECO:0000305" key="14"/>
<evidence type="ECO:0007744" key="15">
    <source>
    </source>
</evidence>
<evidence type="ECO:0007744" key="16">
    <source>
    </source>
</evidence>
<evidence type="ECO:0007744" key="17">
    <source>
    </source>
</evidence>
<evidence type="ECO:0007744" key="18">
    <source>
    </source>
</evidence>
<evidence type="ECO:0007744" key="19">
    <source>
    </source>
</evidence>
<evidence type="ECO:0007744" key="20">
    <source>
    </source>
</evidence>
<evidence type="ECO:0007744" key="21">
    <source>
    </source>
</evidence>
<evidence type="ECO:0007744" key="22">
    <source>
    </source>
</evidence>
<evidence type="ECO:0007744" key="23">
    <source>
    </source>
</evidence>
<evidence type="ECO:0007744" key="24">
    <source>
    </source>
</evidence>
<evidence type="ECO:0007744" key="25">
    <source>
    </source>
</evidence>
<evidence type="ECO:0007744" key="26">
    <source>
    </source>
</evidence>
<evidence type="ECO:0007829" key="27">
    <source>
        <dbReference type="PDB" id="2DNP"/>
    </source>
</evidence>
<protein>
    <recommendedName>
        <fullName>RNA-binding protein 14</fullName>
    </recommendedName>
    <alternativeName>
        <fullName>Paraspeckle protein 2</fullName>
        <shortName>PSP2</shortName>
    </alternativeName>
    <alternativeName>
        <fullName>RNA-binding motif protein 14</fullName>
    </alternativeName>
    <alternativeName>
        <fullName>RRM-containing coactivator activator/modulator</fullName>
    </alternativeName>
    <alternativeName>
        <fullName>Synaptotagmin-interacting protein</fullName>
        <shortName>SYT-interacting protein</shortName>
    </alternativeName>
</protein>
<name>RBM14_HUMAN</name>
<gene>
    <name type="primary">RBM14</name>
    <name type="synonym">SIP</name>
</gene>